<accession>O67852</accession>
<proteinExistence type="inferred from homology"/>
<sequence>MKFLVWGLGRSGKGALKLLKERGFEVYAGDDSQNPELWREVLGEVDTVVLSPGIPPSHPLWKEALKKEKEVVGELELAYRFFKGKVIAITGTDGKSTTTRLTYLILKKFFDEVFEAGNIGKPFSEVVLENPEGIAVLEVSSFQGKTLKTFRPNIGAFISFSVDHLDWHPSIEDYLKSKYRIFENQTEEDFLILNDLVYEIKKTPSRARKVLFSELYINSDSVFYKDIRLFNPKNLKIRGLHNVYNASVASLIALTLGLKPEDFEEVIYEFRGLPHRLEFLGNFNGVEVYNDSKSTTPHALMHALKTFPDNSVILIVGGKDKGADFYSLRHIVQKKVKIALAIGETKEKIKDSWKDITEVKTCNTLEEAVKLAREVSKLGNVVLFSPACSSFDMFRNYEERGEKFKELVEIWFTRT</sequence>
<evidence type="ECO:0000255" key="1">
    <source>
        <dbReference type="HAMAP-Rule" id="MF_00639"/>
    </source>
</evidence>
<comment type="function">
    <text evidence="1">Cell wall formation. Catalyzes the addition of glutamate to the nucleotide precursor UDP-N-acetylmuramoyl-L-alanine (UMA).</text>
</comment>
<comment type="catalytic activity">
    <reaction evidence="1">
        <text>UDP-N-acetyl-alpha-D-muramoyl-L-alanine + D-glutamate + ATP = UDP-N-acetyl-alpha-D-muramoyl-L-alanyl-D-glutamate + ADP + phosphate + H(+)</text>
        <dbReference type="Rhea" id="RHEA:16429"/>
        <dbReference type="ChEBI" id="CHEBI:15378"/>
        <dbReference type="ChEBI" id="CHEBI:29986"/>
        <dbReference type="ChEBI" id="CHEBI:30616"/>
        <dbReference type="ChEBI" id="CHEBI:43474"/>
        <dbReference type="ChEBI" id="CHEBI:83898"/>
        <dbReference type="ChEBI" id="CHEBI:83900"/>
        <dbReference type="ChEBI" id="CHEBI:456216"/>
        <dbReference type="EC" id="6.3.2.9"/>
    </reaction>
</comment>
<comment type="pathway">
    <text evidence="1">Cell wall biogenesis; peptidoglycan biosynthesis.</text>
</comment>
<comment type="subcellular location">
    <subcellularLocation>
        <location evidence="1">Cytoplasm</location>
    </subcellularLocation>
</comment>
<comment type="similarity">
    <text evidence="1">Belongs to the MurCDEF family.</text>
</comment>
<feature type="chain" id="PRO_0000108957" description="UDP-N-acetylmuramoylalanine--D-glutamate ligase">
    <location>
        <begin position="1"/>
        <end position="415"/>
    </location>
</feature>
<feature type="binding site" evidence="1">
    <location>
        <begin position="91"/>
        <end position="97"/>
    </location>
    <ligand>
        <name>ATP</name>
        <dbReference type="ChEBI" id="CHEBI:30616"/>
    </ligand>
</feature>
<name>MURD_AQUAE</name>
<protein>
    <recommendedName>
        <fullName evidence="1">UDP-N-acetylmuramoylalanine--D-glutamate ligase</fullName>
        <ecNumber evidence="1">6.3.2.9</ecNumber>
    </recommendedName>
    <alternativeName>
        <fullName evidence="1">D-glutamic acid-adding enzyme</fullName>
    </alternativeName>
    <alternativeName>
        <fullName evidence="1">UDP-N-acetylmuramoyl-L-alanyl-D-glutamate synthetase</fullName>
    </alternativeName>
</protein>
<gene>
    <name evidence="1" type="primary">murD</name>
    <name type="ordered locus">aq_2075</name>
</gene>
<organism>
    <name type="scientific">Aquifex aeolicus (strain VF5)</name>
    <dbReference type="NCBI Taxonomy" id="224324"/>
    <lineage>
        <taxon>Bacteria</taxon>
        <taxon>Pseudomonadati</taxon>
        <taxon>Aquificota</taxon>
        <taxon>Aquificia</taxon>
        <taxon>Aquificales</taxon>
        <taxon>Aquificaceae</taxon>
        <taxon>Aquifex</taxon>
    </lineage>
</organism>
<dbReference type="EC" id="6.3.2.9" evidence="1"/>
<dbReference type="EMBL" id="AE000657">
    <property type="protein sequence ID" value="AAC07814.1"/>
    <property type="molecule type" value="Genomic_DNA"/>
</dbReference>
<dbReference type="PIR" id="H70477">
    <property type="entry name" value="H70477"/>
</dbReference>
<dbReference type="RefSeq" id="NP_214421.1">
    <property type="nucleotide sequence ID" value="NC_000918.1"/>
</dbReference>
<dbReference type="RefSeq" id="WP_010881357.1">
    <property type="nucleotide sequence ID" value="NC_000918.1"/>
</dbReference>
<dbReference type="SMR" id="O67852"/>
<dbReference type="FunCoup" id="O67852">
    <property type="interactions" value="404"/>
</dbReference>
<dbReference type="STRING" id="224324.aq_2075"/>
<dbReference type="EnsemblBacteria" id="AAC07814">
    <property type="protein sequence ID" value="AAC07814"/>
    <property type="gene ID" value="aq_2075"/>
</dbReference>
<dbReference type="KEGG" id="aae:aq_2075"/>
<dbReference type="PATRIC" id="fig|224324.8.peg.1598"/>
<dbReference type="eggNOG" id="COG0771">
    <property type="taxonomic scope" value="Bacteria"/>
</dbReference>
<dbReference type="HOGENOM" id="CLU_032540_0_0_0"/>
<dbReference type="InParanoid" id="O67852"/>
<dbReference type="OrthoDB" id="9809796at2"/>
<dbReference type="UniPathway" id="UPA00219"/>
<dbReference type="Proteomes" id="UP000000798">
    <property type="component" value="Chromosome"/>
</dbReference>
<dbReference type="GO" id="GO:0005737">
    <property type="term" value="C:cytoplasm"/>
    <property type="evidence" value="ECO:0007669"/>
    <property type="project" value="UniProtKB-SubCell"/>
</dbReference>
<dbReference type="GO" id="GO:0005524">
    <property type="term" value="F:ATP binding"/>
    <property type="evidence" value="ECO:0007669"/>
    <property type="project" value="UniProtKB-UniRule"/>
</dbReference>
<dbReference type="GO" id="GO:0008764">
    <property type="term" value="F:UDP-N-acetylmuramoylalanine-D-glutamate ligase activity"/>
    <property type="evidence" value="ECO:0007669"/>
    <property type="project" value="UniProtKB-UniRule"/>
</dbReference>
<dbReference type="GO" id="GO:0051301">
    <property type="term" value="P:cell division"/>
    <property type="evidence" value="ECO:0007669"/>
    <property type="project" value="UniProtKB-KW"/>
</dbReference>
<dbReference type="GO" id="GO:0071555">
    <property type="term" value="P:cell wall organization"/>
    <property type="evidence" value="ECO:0007669"/>
    <property type="project" value="UniProtKB-KW"/>
</dbReference>
<dbReference type="GO" id="GO:0009252">
    <property type="term" value="P:peptidoglycan biosynthetic process"/>
    <property type="evidence" value="ECO:0007669"/>
    <property type="project" value="UniProtKB-UniRule"/>
</dbReference>
<dbReference type="GO" id="GO:0008360">
    <property type="term" value="P:regulation of cell shape"/>
    <property type="evidence" value="ECO:0007669"/>
    <property type="project" value="UniProtKB-KW"/>
</dbReference>
<dbReference type="Gene3D" id="3.90.190.20">
    <property type="entry name" value="Mur ligase, C-terminal domain"/>
    <property type="match status" value="1"/>
</dbReference>
<dbReference type="Gene3D" id="3.40.1190.10">
    <property type="entry name" value="Mur-like, catalytic domain"/>
    <property type="match status" value="1"/>
</dbReference>
<dbReference type="Gene3D" id="3.40.50.720">
    <property type="entry name" value="NAD(P)-binding Rossmann-like Domain"/>
    <property type="match status" value="1"/>
</dbReference>
<dbReference type="HAMAP" id="MF_00639">
    <property type="entry name" value="MurD"/>
    <property type="match status" value="1"/>
</dbReference>
<dbReference type="InterPro" id="IPR036565">
    <property type="entry name" value="Mur-like_cat_sf"/>
</dbReference>
<dbReference type="InterPro" id="IPR004101">
    <property type="entry name" value="Mur_ligase_C"/>
</dbReference>
<dbReference type="InterPro" id="IPR036615">
    <property type="entry name" value="Mur_ligase_C_dom_sf"/>
</dbReference>
<dbReference type="InterPro" id="IPR013221">
    <property type="entry name" value="Mur_ligase_cen"/>
</dbReference>
<dbReference type="InterPro" id="IPR005762">
    <property type="entry name" value="MurD"/>
</dbReference>
<dbReference type="NCBIfam" id="TIGR01087">
    <property type="entry name" value="murD"/>
    <property type="match status" value="1"/>
</dbReference>
<dbReference type="PANTHER" id="PTHR43692">
    <property type="entry name" value="UDP-N-ACETYLMURAMOYLALANINE--D-GLUTAMATE LIGASE"/>
    <property type="match status" value="1"/>
</dbReference>
<dbReference type="PANTHER" id="PTHR43692:SF1">
    <property type="entry name" value="UDP-N-ACETYLMURAMOYLALANINE--D-GLUTAMATE LIGASE"/>
    <property type="match status" value="1"/>
</dbReference>
<dbReference type="Pfam" id="PF02875">
    <property type="entry name" value="Mur_ligase_C"/>
    <property type="match status" value="1"/>
</dbReference>
<dbReference type="Pfam" id="PF08245">
    <property type="entry name" value="Mur_ligase_M"/>
    <property type="match status" value="1"/>
</dbReference>
<dbReference type="SUPFAM" id="SSF51984">
    <property type="entry name" value="MurCD N-terminal domain"/>
    <property type="match status" value="1"/>
</dbReference>
<dbReference type="SUPFAM" id="SSF53623">
    <property type="entry name" value="MurD-like peptide ligases, catalytic domain"/>
    <property type="match status" value="1"/>
</dbReference>
<dbReference type="SUPFAM" id="SSF53244">
    <property type="entry name" value="MurD-like peptide ligases, peptide-binding domain"/>
    <property type="match status" value="1"/>
</dbReference>
<keyword id="KW-0067">ATP-binding</keyword>
<keyword id="KW-0131">Cell cycle</keyword>
<keyword id="KW-0132">Cell division</keyword>
<keyword id="KW-0133">Cell shape</keyword>
<keyword id="KW-0961">Cell wall biogenesis/degradation</keyword>
<keyword id="KW-0963">Cytoplasm</keyword>
<keyword id="KW-0436">Ligase</keyword>
<keyword id="KW-0547">Nucleotide-binding</keyword>
<keyword id="KW-0573">Peptidoglycan synthesis</keyword>
<keyword id="KW-1185">Reference proteome</keyword>
<reference key="1">
    <citation type="journal article" date="1998" name="Nature">
        <title>The complete genome of the hyperthermophilic bacterium Aquifex aeolicus.</title>
        <authorList>
            <person name="Deckert G."/>
            <person name="Warren P.V."/>
            <person name="Gaasterland T."/>
            <person name="Young W.G."/>
            <person name="Lenox A.L."/>
            <person name="Graham D.E."/>
            <person name="Overbeek R."/>
            <person name="Snead M.A."/>
            <person name="Keller M."/>
            <person name="Aujay M."/>
            <person name="Huber R."/>
            <person name="Feldman R.A."/>
            <person name="Short J.M."/>
            <person name="Olsen G.J."/>
            <person name="Swanson R.V."/>
        </authorList>
    </citation>
    <scope>NUCLEOTIDE SEQUENCE [LARGE SCALE GENOMIC DNA]</scope>
    <source>
        <strain>VF5</strain>
    </source>
</reference>